<gene>
    <name type="primary">fnrA</name>
</gene>
<reference key="1">
    <citation type="journal article" date="1993" name="J. Bacteriol.">
        <title>Anaerobic control of denitrification in Pseudomonas stutzeri escapes mutagenesis of an fnr-like gene.</title>
        <authorList>
            <person name="Cuypers H."/>
            <person name="Zumft W.G."/>
        </authorList>
    </citation>
    <scope>NUCLEOTIDE SEQUENCE [GENOMIC DNA]</scope>
    <source>
        <strain>ATCC 14405 / JCM 20778 / CIP 107696 / IAM 12931 / LMG 2243 / NCIMB 568 / Baumann 218 / ZoBell 632</strain>
    </source>
</reference>
<proteinExistence type="predicted"/>
<evidence type="ECO:0000255" key="1">
    <source>
        <dbReference type="PROSITE-ProRule" id="PRU00387"/>
    </source>
</evidence>
<sequence>MSESIKVRAQRQAHCKDCSLSGLCLPLSLNMQDMDALDDIVKRGRPLKKGETLFRQGDTFSSVFAVRSGALRTFSVTDGGEEQITGFHLPSELVGLSGMDTEMYPVTAQALETTSVCEIPFERLDELSVLLPQLRRQLMRIMSREIRDDQQMMLLLSKKTADERIATFLINLSARFSARGFSANQFRLPMSRNEIGNYLGLAVETVSRVFTRFQQNGLLEAEGKEVRILDSIGLCALAGGAMDA</sequence>
<accession>P47200</accession>
<name>FNRA_STUST</name>
<dbReference type="EMBL" id="Z26044">
    <property type="protein sequence ID" value="CAA81129.1"/>
    <property type="molecule type" value="Genomic_DNA"/>
</dbReference>
<dbReference type="PIR" id="A49927">
    <property type="entry name" value="S37397"/>
</dbReference>
<dbReference type="SMR" id="P47200"/>
<dbReference type="eggNOG" id="COG0664">
    <property type="taxonomic scope" value="Bacteria"/>
</dbReference>
<dbReference type="GO" id="GO:0005829">
    <property type="term" value="C:cytosol"/>
    <property type="evidence" value="ECO:0007669"/>
    <property type="project" value="TreeGrafter"/>
</dbReference>
<dbReference type="GO" id="GO:0003677">
    <property type="term" value="F:DNA binding"/>
    <property type="evidence" value="ECO:0007669"/>
    <property type="project" value="UniProtKB-KW"/>
</dbReference>
<dbReference type="GO" id="GO:0003700">
    <property type="term" value="F:DNA-binding transcription factor activity"/>
    <property type="evidence" value="ECO:0007669"/>
    <property type="project" value="InterPro"/>
</dbReference>
<dbReference type="CDD" id="cd00038">
    <property type="entry name" value="CAP_ED"/>
    <property type="match status" value="1"/>
</dbReference>
<dbReference type="CDD" id="cd00092">
    <property type="entry name" value="HTH_CRP"/>
    <property type="match status" value="1"/>
</dbReference>
<dbReference type="FunFam" id="1.10.10.10:FF:000028">
    <property type="entry name" value="Fumarate/nitrate reduction transcriptional regulator Fnr"/>
    <property type="match status" value="1"/>
</dbReference>
<dbReference type="FunFam" id="2.60.120.10:FF:000004">
    <property type="entry name" value="Fumarate/nitrate reduction transcriptional regulator Fnr"/>
    <property type="match status" value="1"/>
</dbReference>
<dbReference type="Gene3D" id="2.60.120.10">
    <property type="entry name" value="Jelly Rolls"/>
    <property type="match status" value="1"/>
</dbReference>
<dbReference type="Gene3D" id="1.10.10.10">
    <property type="entry name" value="Winged helix-like DNA-binding domain superfamily/Winged helix DNA-binding domain"/>
    <property type="match status" value="1"/>
</dbReference>
<dbReference type="InterPro" id="IPR000595">
    <property type="entry name" value="cNMP-bd_dom"/>
</dbReference>
<dbReference type="InterPro" id="IPR018490">
    <property type="entry name" value="cNMP-bd_dom_sf"/>
</dbReference>
<dbReference type="InterPro" id="IPR050397">
    <property type="entry name" value="Env_Response_Regulators"/>
</dbReference>
<dbReference type="InterPro" id="IPR012318">
    <property type="entry name" value="HTH_CRP"/>
</dbReference>
<dbReference type="InterPro" id="IPR014710">
    <property type="entry name" value="RmlC-like_jellyroll"/>
</dbReference>
<dbReference type="InterPro" id="IPR018335">
    <property type="entry name" value="Tscrpt_reg_HTH_Crp-type_CS"/>
</dbReference>
<dbReference type="InterPro" id="IPR036388">
    <property type="entry name" value="WH-like_DNA-bd_sf"/>
</dbReference>
<dbReference type="InterPro" id="IPR036390">
    <property type="entry name" value="WH_DNA-bd_sf"/>
</dbReference>
<dbReference type="NCBIfam" id="NF008365">
    <property type="entry name" value="PRK11161.1"/>
    <property type="match status" value="1"/>
</dbReference>
<dbReference type="PANTHER" id="PTHR24567">
    <property type="entry name" value="CRP FAMILY TRANSCRIPTIONAL REGULATORY PROTEIN"/>
    <property type="match status" value="1"/>
</dbReference>
<dbReference type="PANTHER" id="PTHR24567:SF75">
    <property type="entry name" value="FUMARATE AND NITRATE REDUCTION REGULATORY PROTEIN"/>
    <property type="match status" value="1"/>
</dbReference>
<dbReference type="Pfam" id="PF00027">
    <property type="entry name" value="cNMP_binding"/>
    <property type="match status" value="1"/>
</dbReference>
<dbReference type="Pfam" id="PF00325">
    <property type="entry name" value="Crp"/>
    <property type="match status" value="1"/>
</dbReference>
<dbReference type="PRINTS" id="PR00034">
    <property type="entry name" value="HTHCRP"/>
</dbReference>
<dbReference type="SMART" id="SM00100">
    <property type="entry name" value="cNMP"/>
    <property type="match status" value="1"/>
</dbReference>
<dbReference type="SMART" id="SM00419">
    <property type="entry name" value="HTH_CRP"/>
    <property type="match status" value="1"/>
</dbReference>
<dbReference type="SUPFAM" id="SSF51206">
    <property type="entry name" value="cAMP-binding domain-like"/>
    <property type="match status" value="1"/>
</dbReference>
<dbReference type="SUPFAM" id="SSF46785">
    <property type="entry name" value="Winged helix' DNA-binding domain"/>
    <property type="match status" value="1"/>
</dbReference>
<dbReference type="PROSITE" id="PS50042">
    <property type="entry name" value="CNMP_BINDING_3"/>
    <property type="match status" value="1"/>
</dbReference>
<dbReference type="PROSITE" id="PS00042">
    <property type="entry name" value="HTH_CRP_1"/>
    <property type="match status" value="1"/>
</dbReference>
<dbReference type="PROSITE" id="PS51063">
    <property type="entry name" value="HTH_CRP_2"/>
    <property type="match status" value="1"/>
</dbReference>
<comment type="function">
    <text>Transcriptional regulator of arginine deiminase.</text>
</comment>
<comment type="miscellaneous">
    <text>Possesses 4 cysteines which may bind a metal ion (possibly iron).</text>
</comment>
<keyword id="KW-0010">Activator</keyword>
<keyword id="KW-0238">DNA-binding</keyword>
<keyword id="KW-0408">Iron</keyword>
<keyword id="KW-0804">Transcription</keyword>
<keyword id="KW-0805">Transcription regulation</keyword>
<protein>
    <recommendedName>
        <fullName>Transcriptional activator protein FnrA</fullName>
    </recommendedName>
</protein>
<organism>
    <name type="scientific">Stutzerimonas stutzeri</name>
    <name type="common">Pseudomonas stutzeri</name>
    <dbReference type="NCBI Taxonomy" id="316"/>
    <lineage>
        <taxon>Bacteria</taxon>
        <taxon>Pseudomonadati</taxon>
        <taxon>Pseudomonadota</taxon>
        <taxon>Gammaproteobacteria</taxon>
        <taxon>Pseudomonadales</taxon>
        <taxon>Pseudomonadaceae</taxon>
        <taxon>Stutzerimonas</taxon>
    </lineage>
</organism>
<feature type="chain" id="PRO_0000100179" description="Transcriptional activator protein FnrA">
    <location>
        <begin position="1"/>
        <end position="244"/>
    </location>
</feature>
<feature type="domain" description="HTH crp-type" evidence="1">
    <location>
        <begin position="159"/>
        <end position="232"/>
    </location>
</feature>
<feature type="DNA-binding region" description="H-T-H motif" evidence="1">
    <location>
        <begin position="192"/>
        <end position="211"/>
    </location>
</feature>